<feature type="chain" id="PRO_1000059941" description="Imidazolonepropionase">
    <location>
        <begin position="1"/>
        <end position="422"/>
    </location>
</feature>
<feature type="binding site" evidence="1">
    <location>
        <position position="82"/>
    </location>
    <ligand>
        <name>Fe(3+)</name>
        <dbReference type="ChEBI" id="CHEBI:29034"/>
    </ligand>
</feature>
<feature type="binding site" evidence="1">
    <location>
        <position position="82"/>
    </location>
    <ligand>
        <name>Zn(2+)</name>
        <dbReference type="ChEBI" id="CHEBI:29105"/>
    </ligand>
</feature>
<feature type="binding site" evidence="1">
    <location>
        <position position="84"/>
    </location>
    <ligand>
        <name>Fe(3+)</name>
        <dbReference type="ChEBI" id="CHEBI:29034"/>
    </ligand>
</feature>
<feature type="binding site" evidence="1">
    <location>
        <position position="84"/>
    </location>
    <ligand>
        <name>Zn(2+)</name>
        <dbReference type="ChEBI" id="CHEBI:29105"/>
    </ligand>
</feature>
<feature type="binding site" evidence="1">
    <location>
        <position position="91"/>
    </location>
    <ligand>
        <name>4-imidazolone-5-propanoate</name>
        <dbReference type="ChEBI" id="CHEBI:77893"/>
    </ligand>
</feature>
<feature type="binding site" evidence="1">
    <location>
        <position position="154"/>
    </location>
    <ligand>
        <name>4-imidazolone-5-propanoate</name>
        <dbReference type="ChEBI" id="CHEBI:77893"/>
    </ligand>
</feature>
<feature type="binding site" evidence="1">
    <location>
        <position position="154"/>
    </location>
    <ligand>
        <name>N-formimidoyl-L-glutamate</name>
        <dbReference type="ChEBI" id="CHEBI:58928"/>
    </ligand>
</feature>
<feature type="binding site" evidence="1">
    <location>
        <position position="187"/>
    </location>
    <ligand>
        <name>4-imidazolone-5-propanoate</name>
        <dbReference type="ChEBI" id="CHEBI:77893"/>
    </ligand>
</feature>
<feature type="binding site" evidence="1">
    <location>
        <position position="252"/>
    </location>
    <ligand>
        <name>Fe(3+)</name>
        <dbReference type="ChEBI" id="CHEBI:29034"/>
    </ligand>
</feature>
<feature type="binding site" evidence="1">
    <location>
        <position position="252"/>
    </location>
    <ligand>
        <name>Zn(2+)</name>
        <dbReference type="ChEBI" id="CHEBI:29105"/>
    </ligand>
</feature>
<feature type="binding site" evidence="1">
    <location>
        <position position="255"/>
    </location>
    <ligand>
        <name>4-imidazolone-5-propanoate</name>
        <dbReference type="ChEBI" id="CHEBI:77893"/>
    </ligand>
</feature>
<feature type="binding site" evidence="1">
    <location>
        <position position="327"/>
    </location>
    <ligand>
        <name>Fe(3+)</name>
        <dbReference type="ChEBI" id="CHEBI:29034"/>
    </ligand>
</feature>
<feature type="binding site" evidence="1">
    <location>
        <position position="327"/>
    </location>
    <ligand>
        <name>Zn(2+)</name>
        <dbReference type="ChEBI" id="CHEBI:29105"/>
    </ligand>
</feature>
<feature type="binding site" evidence="1">
    <location>
        <position position="329"/>
    </location>
    <ligand>
        <name>N-formimidoyl-L-glutamate</name>
        <dbReference type="ChEBI" id="CHEBI:58928"/>
    </ligand>
</feature>
<feature type="binding site" evidence="1">
    <location>
        <position position="331"/>
    </location>
    <ligand>
        <name>N-formimidoyl-L-glutamate</name>
        <dbReference type="ChEBI" id="CHEBI:58928"/>
    </ligand>
</feature>
<feature type="binding site" evidence="1">
    <location>
        <position position="332"/>
    </location>
    <ligand>
        <name>4-imidazolone-5-propanoate</name>
        <dbReference type="ChEBI" id="CHEBI:77893"/>
    </ligand>
</feature>
<gene>
    <name evidence="1" type="primary">hutI</name>
    <name type="ordered locus">Amet_3148</name>
</gene>
<keyword id="KW-0963">Cytoplasm</keyword>
<keyword id="KW-0369">Histidine metabolism</keyword>
<keyword id="KW-0378">Hydrolase</keyword>
<keyword id="KW-0408">Iron</keyword>
<keyword id="KW-0479">Metal-binding</keyword>
<keyword id="KW-1185">Reference proteome</keyword>
<keyword id="KW-0862">Zinc</keyword>
<protein>
    <recommendedName>
        <fullName evidence="1">Imidazolonepropionase</fullName>
        <ecNumber evidence="1">3.5.2.7</ecNumber>
    </recommendedName>
    <alternativeName>
        <fullName evidence="1">Imidazolone-5-propionate hydrolase</fullName>
    </alternativeName>
</protein>
<evidence type="ECO:0000255" key="1">
    <source>
        <dbReference type="HAMAP-Rule" id="MF_00372"/>
    </source>
</evidence>
<name>HUTI_ALKMQ</name>
<dbReference type="EC" id="3.5.2.7" evidence="1"/>
<dbReference type="EMBL" id="CP000724">
    <property type="protein sequence ID" value="ABR49287.1"/>
    <property type="molecule type" value="Genomic_DNA"/>
</dbReference>
<dbReference type="RefSeq" id="WP_012064253.1">
    <property type="nucleotide sequence ID" value="NC_009633.1"/>
</dbReference>
<dbReference type="SMR" id="A6TSW9"/>
<dbReference type="STRING" id="293826.Amet_3148"/>
<dbReference type="KEGG" id="amt:Amet_3148"/>
<dbReference type="eggNOG" id="COG1228">
    <property type="taxonomic scope" value="Bacteria"/>
</dbReference>
<dbReference type="HOGENOM" id="CLU_041647_0_1_9"/>
<dbReference type="OrthoDB" id="9776455at2"/>
<dbReference type="UniPathway" id="UPA00379">
    <property type="reaction ID" value="UER00551"/>
</dbReference>
<dbReference type="Proteomes" id="UP000001572">
    <property type="component" value="Chromosome"/>
</dbReference>
<dbReference type="GO" id="GO:0005737">
    <property type="term" value="C:cytoplasm"/>
    <property type="evidence" value="ECO:0007669"/>
    <property type="project" value="UniProtKB-SubCell"/>
</dbReference>
<dbReference type="GO" id="GO:0050480">
    <property type="term" value="F:imidazolonepropionase activity"/>
    <property type="evidence" value="ECO:0007669"/>
    <property type="project" value="UniProtKB-UniRule"/>
</dbReference>
<dbReference type="GO" id="GO:0005506">
    <property type="term" value="F:iron ion binding"/>
    <property type="evidence" value="ECO:0007669"/>
    <property type="project" value="UniProtKB-UniRule"/>
</dbReference>
<dbReference type="GO" id="GO:0008270">
    <property type="term" value="F:zinc ion binding"/>
    <property type="evidence" value="ECO:0007669"/>
    <property type="project" value="UniProtKB-UniRule"/>
</dbReference>
<dbReference type="GO" id="GO:0019556">
    <property type="term" value="P:L-histidine catabolic process to glutamate and formamide"/>
    <property type="evidence" value="ECO:0007669"/>
    <property type="project" value="UniProtKB-UniPathway"/>
</dbReference>
<dbReference type="GO" id="GO:0019557">
    <property type="term" value="P:L-histidine catabolic process to glutamate and formate"/>
    <property type="evidence" value="ECO:0007669"/>
    <property type="project" value="UniProtKB-UniPathway"/>
</dbReference>
<dbReference type="CDD" id="cd01296">
    <property type="entry name" value="Imidazolone-5PH"/>
    <property type="match status" value="1"/>
</dbReference>
<dbReference type="FunFam" id="3.20.20.140:FF:000007">
    <property type="entry name" value="Imidazolonepropionase"/>
    <property type="match status" value="1"/>
</dbReference>
<dbReference type="Gene3D" id="3.20.20.140">
    <property type="entry name" value="Metal-dependent hydrolases"/>
    <property type="match status" value="1"/>
</dbReference>
<dbReference type="Gene3D" id="2.30.40.10">
    <property type="entry name" value="Urease, subunit C, domain 1"/>
    <property type="match status" value="1"/>
</dbReference>
<dbReference type="HAMAP" id="MF_00372">
    <property type="entry name" value="HutI"/>
    <property type="match status" value="1"/>
</dbReference>
<dbReference type="InterPro" id="IPR006680">
    <property type="entry name" value="Amidohydro-rel"/>
</dbReference>
<dbReference type="InterPro" id="IPR005920">
    <property type="entry name" value="HutI"/>
</dbReference>
<dbReference type="InterPro" id="IPR011059">
    <property type="entry name" value="Metal-dep_hydrolase_composite"/>
</dbReference>
<dbReference type="InterPro" id="IPR032466">
    <property type="entry name" value="Metal_Hydrolase"/>
</dbReference>
<dbReference type="NCBIfam" id="TIGR01224">
    <property type="entry name" value="hutI"/>
    <property type="match status" value="1"/>
</dbReference>
<dbReference type="PANTHER" id="PTHR42752">
    <property type="entry name" value="IMIDAZOLONEPROPIONASE"/>
    <property type="match status" value="1"/>
</dbReference>
<dbReference type="PANTHER" id="PTHR42752:SF1">
    <property type="entry name" value="IMIDAZOLONEPROPIONASE-RELATED"/>
    <property type="match status" value="1"/>
</dbReference>
<dbReference type="Pfam" id="PF01979">
    <property type="entry name" value="Amidohydro_1"/>
    <property type="match status" value="1"/>
</dbReference>
<dbReference type="SUPFAM" id="SSF51338">
    <property type="entry name" value="Composite domain of metallo-dependent hydrolases"/>
    <property type="match status" value="1"/>
</dbReference>
<dbReference type="SUPFAM" id="SSF51556">
    <property type="entry name" value="Metallo-dependent hydrolases"/>
    <property type="match status" value="1"/>
</dbReference>
<sequence>MMVDVLIKDISQMVTMKGSNGPRRGKDMREVHLIEDGWIAIKGDKIVAVGSGLMEENLKIGKNTMVIDGKGKTVTPGLVDPHTHLVHGGSRENELALKLNGVPYLDILAQGGGILSTVKATRKATVEELMQQGKRSLDQMLSFGVTTVEVKSGYGLNTETELKQLEVIRQLNKEHPCDLVPTFMGAHAIPMEYKEDPDVFVDIVIDEMLPAVVERGLAEFCDVFCEKGVFTVAQSRRVLEAAREAGLKLRIHVDEIEALGGAELAAEMGAITAEHLMVTSEEDMKKMAKAGVIAALLPGTSFNLMVGKYAQARKMIDYGVPITLSTDYNPGSCPTENIQFIMTLGCLAMKMTPEEVFTAVTINGAAAVDRQGDIGSLEVGKKADVVIFNAPNINYIPYHFGINHVDKVLKNGKLVVDKGRVI</sequence>
<comment type="function">
    <text evidence="1">Catalyzes the hydrolytic cleavage of the carbon-nitrogen bond in imidazolone-5-propanoate to yield N-formimidoyl-L-glutamate. It is the third step in the universal histidine degradation pathway.</text>
</comment>
<comment type="catalytic activity">
    <reaction evidence="1">
        <text>4-imidazolone-5-propanoate + H2O = N-formimidoyl-L-glutamate</text>
        <dbReference type="Rhea" id="RHEA:23660"/>
        <dbReference type="ChEBI" id="CHEBI:15377"/>
        <dbReference type="ChEBI" id="CHEBI:58928"/>
        <dbReference type="ChEBI" id="CHEBI:77893"/>
        <dbReference type="EC" id="3.5.2.7"/>
    </reaction>
</comment>
<comment type="cofactor">
    <cofactor evidence="1">
        <name>Zn(2+)</name>
        <dbReference type="ChEBI" id="CHEBI:29105"/>
    </cofactor>
    <cofactor evidence="1">
        <name>Fe(3+)</name>
        <dbReference type="ChEBI" id="CHEBI:29034"/>
    </cofactor>
    <text evidence="1">Binds 1 zinc or iron ion per subunit.</text>
</comment>
<comment type="pathway">
    <text evidence="1">Amino-acid degradation; L-histidine degradation into L-glutamate; N-formimidoyl-L-glutamate from L-histidine: step 3/3.</text>
</comment>
<comment type="subcellular location">
    <subcellularLocation>
        <location evidence="1">Cytoplasm</location>
    </subcellularLocation>
</comment>
<comment type="similarity">
    <text evidence="1">Belongs to the metallo-dependent hydrolases superfamily. HutI family.</text>
</comment>
<reference key="1">
    <citation type="journal article" date="2016" name="Genome Announc.">
        <title>Complete genome sequence of Alkaliphilus metalliredigens strain QYMF, an alkaliphilic and metal-reducing bacterium isolated from borax-contaminated leachate ponds.</title>
        <authorList>
            <person name="Hwang C."/>
            <person name="Copeland A."/>
            <person name="Lucas S."/>
            <person name="Lapidus A."/>
            <person name="Barry K."/>
            <person name="Detter J.C."/>
            <person name="Glavina Del Rio T."/>
            <person name="Hammon N."/>
            <person name="Israni S."/>
            <person name="Dalin E."/>
            <person name="Tice H."/>
            <person name="Pitluck S."/>
            <person name="Chertkov O."/>
            <person name="Brettin T."/>
            <person name="Bruce D."/>
            <person name="Han C."/>
            <person name="Schmutz J."/>
            <person name="Larimer F."/>
            <person name="Land M.L."/>
            <person name="Hauser L."/>
            <person name="Kyrpides N."/>
            <person name="Mikhailova N."/>
            <person name="Ye Q."/>
            <person name="Zhou J."/>
            <person name="Richardson P."/>
            <person name="Fields M.W."/>
        </authorList>
    </citation>
    <scope>NUCLEOTIDE SEQUENCE [LARGE SCALE GENOMIC DNA]</scope>
    <source>
        <strain>QYMF</strain>
    </source>
</reference>
<accession>A6TSW9</accession>
<proteinExistence type="inferred from homology"/>
<organism>
    <name type="scientific">Alkaliphilus metalliredigens (strain QYMF)</name>
    <dbReference type="NCBI Taxonomy" id="293826"/>
    <lineage>
        <taxon>Bacteria</taxon>
        <taxon>Bacillati</taxon>
        <taxon>Bacillota</taxon>
        <taxon>Clostridia</taxon>
        <taxon>Peptostreptococcales</taxon>
        <taxon>Natronincolaceae</taxon>
        <taxon>Alkaliphilus</taxon>
    </lineage>
</organism>